<reference key="1">
    <citation type="submission" date="2008-12" db="EMBL/GenBank/DDBJ databases">
        <title>Complete sequence of chromosome of Methylobacterium chloromethanicum CM4.</title>
        <authorList>
            <consortium name="US DOE Joint Genome Institute"/>
            <person name="Lucas S."/>
            <person name="Copeland A."/>
            <person name="Lapidus A."/>
            <person name="Glavina del Rio T."/>
            <person name="Dalin E."/>
            <person name="Tice H."/>
            <person name="Bruce D."/>
            <person name="Goodwin L."/>
            <person name="Pitluck S."/>
            <person name="Chertkov O."/>
            <person name="Brettin T."/>
            <person name="Detter J.C."/>
            <person name="Han C."/>
            <person name="Larimer F."/>
            <person name="Land M."/>
            <person name="Hauser L."/>
            <person name="Kyrpides N."/>
            <person name="Mikhailova N."/>
            <person name="Marx C."/>
            <person name="Richardson P."/>
        </authorList>
    </citation>
    <scope>NUCLEOTIDE SEQUENCE [LARGE SCALE GENOMIC DNA]</scope>
    <source>
        <strain>CM4 / NCIMB 13688</strain>
    </source>
</reference>
<dbReference type="EC" id="3.1.3.5" evidence="1"/>
<dbReference type="EMBL" id="CP001298">
    <property type="protein sequence ID" value="ACK85377.1"/>
    <property type="molecule type" value="Genomic_DNA"/>
</dbReference>
<dbReference type="RefSeq" id="WP_003605704.1">
    <property type="nucleotide sequence ID" value="NC_011757.1"/>
</dbReference>
<dbReference type="SMR" id="B7KPY4"/>
<dbReference type="KEGG" id="mch:Mchl_4603"/>
<dbReference type="HOGENOM" id="CLU_045192_1_2_5"/>
<dbReference type="Proteomes" id="UP000002385">
    <property type="component" value="Chromosome"/>
</dbReference>
<dbReference type="GO" id="GO:0005737">
    <property type="term" value="C:cytoplasm"/>
    <property type="evidence" value="ECO:0007669"/>
    <property type="project" value="UniProtKB-SubCell"/>
</dbReference>
<dbReference type="GO" id="GO:0008254">
    <property type="term" value="F:3'-nucleotidase activity"/>
    <property type="evidence" value="ECO:0007669"/>
    <property type="project" value="TreeGrafter"/>
</dbReference>
<dbReference type="GO" id="GO:0008253">
    <property type="term" value="F:5'-nucleotidase activity"/>
    <property type="evidence" value="ECO:0007669"/>
    <property type="project" value="UniProtKB-UniRule"/>
</dbReference>
<dbReference type="GO" id="GO:0004309">
    <property type="term" value="F:exopolyphosphatase activity"/>
    <property type="evidence" value="ECO:0007669"/>
    <property type="project" value="TreeGrafter"/>
</dbReference>
<dbReference type="GO" id="GO:0046872">
    <property type="term" value="F:metal ion binding"/>
    <property type="evidence" value="ECO:0007669"/>
    <property type="project" value="UniProtKB-UniRule"/>
</dbReference>
<dbReference type="GO" id="GO:0000166">
    <property type="term" value="F:nucleotide binding"/>
    <property type="evidence" value="ECO:0007669"/>
    <property type="project" value="UniProtKB-KW"/>
</dbReference>
<dbReference type="FunFam" id="3.40.1210.10:FF:000001">
    <property type="entry name" value="5'/3'-nucleotidase SurE"/>
    <property type="match status" value="1"/>
</dbReference>
<dbReference type="Gene3D" id="3.40.1210.10">
    <property type="entry name" value="Survival protein SurE-like phosphatase/nucleotidase"/>
    <property type="match status" value="1"/>
</dbReference>
<dbReference type="HAMAP" id="MF_00060">
    <property type="entry name" value="SurE"/>
    <property type="match status" value="1"/>
</dbReference>
<dbReference type="InterPro" id="IPR030048">
    <property type="entry name" value="SurE"/>
</dbReference>
<dbReference type="InterPro" id="IPR002828">
    <property type="entry name" value="SurE-like_Pase/nucleotidase"/>
</dbReference>
<dbReference type="InterPro" id="IPR036523">
    <property type="entry name" value="SurE-like_sf"/>
</dbReference>
<dbReference type="NCBIfam" id="NF001490">
    <property type="entry name" value="PRK00346.1-4"/>
    <property type="match status" value="1"/>
</dbReference>
<dbReference type="NCBIfam" id="TIGR00087">
    <property type="entry name" value="surE"/>
    <property type="match status" value="1"/>
</dbReference>
<dbReference type="PANTHER" id="PTHR30457">
    <property type="entry name" value="5'-NUCLEOTIDASE SURE"/>
    <property type="match status" value="1"/>
</dbReference>
<dbReference type="PANTHER" id="PTHR30457:SF12">
    <property type="entry name" value="5'_3'-NUCLEOTIDASE SURE"/>
    <property type="match status" value="1"/>
</dbReference>
<dbReference type="Pfam" id="PF01975">
    <property type="entry name" value="SurE"/>
    <property type="match status" value="1"/>
</dbReference>
<dbReference type="SUPFAM" id="SSF64167">
    <property type="entry name" value="SurE-like"/>
    <property type="match status" value="1"/>
</dbReference>
<sequence length="254" mass="27263">MRILVTNDDGIHAPGLETLEGIARALSDDVWVVAPETDQSGVSHSLSLNDPLRLRQIGEKRFAVKGTPSDCIIMGVAHILKDHKPDLVLSGVNRGQNVAEDVTYSGTIAGAMEGTILGIRSIALSQAYGAGGRANLKWACAATHGPRVIEKILEIGIEPGILVNVNFPDCEPEDVQGVAVSAQGQRNQALLQIDARHDGRGNPYFWLAFAKARFEPGNGTDLKAIAENRISVTPLRLDLTDEPELTRFAAAFRA</sequence>
<protein>
    <recommendedName>
        <fullName evidence="1">5'-nucleotidase SurE</fullName>
        <ecNumber evidence="1">3.1.3.5</ecNumber>
    </recommendedName>
    <alternativeName>
        <fullName evidence="1">Nucleoside 5'-monophosphate phosphohydrolase</fullName>
    </alternativeName>
</protein>
<organism>
    <name type="scientific">Methylorubrum extorquens (strain CM4 / NCIMB 13688)</name>
    <name type="common">Methylobacterium extorquens</name>
    <dbReference type="NCBI Taxonomy" id="440085"/>
    <lineage>
        <taxon>Bacteria</taxon>
        <taxon>Pseudomonadati</taxon>
        <taxon>Pseudomonadota</taxon>
        <taxon>Alphaproteobacteria</taxon>
        <taxon>Hyphomicrobiales</taxon>
        <taxon>Methylobacteriaceae</taxon>
        <taxon>Methylorubrum</taxon>
    </lineage>
</organism>
<keyword id="KW-0963">Cytoplasm</keyword>
<keyword id="KW-0378">Hydrolase</keyword>
<keyword id="KW-0479">Metal-binding</keyword>
<keyword id="KW-0547">Nucleotide-binding</keyword>
<name>SURE_METC4</name>
<feature type="chain" id="PRO_1000196608" description="5'-nucleotidase SurE">
    <location>
        <begin position="1"/>
        <end position="254"/>
    </location>
</feature>
<feature type="binding site" evidence="1">
    <location>
        <position position="8"/>
    </location>
    <ligand>
        <name>a divalent metal cation</name>
        <dbReference type="ChEBI" id="CHEBI:60240"/>
    </ligand>
</feature>
<feature type="binding site" evidence="1">
    <location>
        <position position="9"/>
    </location>
    <ligand>
        <name>a divalent metal cation</name>
        <dbReference type="ChEBI" id="CHEBI:60240"/>
    </ligand>
</feature>
<feature type="binding site" evidence="1">
    <location>
        <position position="40"/>
    </location>
    <ligand>
        <name>a divalent metal cation</name>
        <dbReference type="ChEBI" id="CHEBI:60240"/>
    </ligand>
</feature>
<feature type="binding site" evidence="1">
    <location>
        <position position="93"/>
    </location>
    <ligand>
        <name>a divalent metal cation</name>
        <dbReference type="ChEBI" id="CHEBI:60240"/>
    </ligand>
</feature>
<gene>
    <name evidence="1" type="primary">surE</name>
    <name type="ordered locus">Mchl_4603</name>
</gene>
<proteinExistence type="inferred from homology"/>
<accession>B7KPY4</accession>
<evidence type="ECO:0000255" key="1">
    <source>
        <dbReference type="HAMAP-Rule" id="MF_00060"/>
    </source>
</evidence>
<comment type="function">
    <text evidence="1">Nucleotidase that shows phosphatase activity on nucleoside 5'-monophosphates.</text>
</comment>
<comment type="catalytic activity">
    <reaction evidence="1">
        <text>a ribonucleoside 5'-phosphate + H2O = a ribonucleoside + phosphate</text>
        <dbReference type="Rhea" id="RHEA:12484"/>
        <dbReference type="ChEBI" id="CHEBI:15377"/>
        <dbReference type="ChEBI" id="CHEBI:18254"/>
        <dbReference type="ChEBI" id="CHEBI:43474"/>
        <dbReference type="ChEBI" id="CHEBI:58043"/>
        <dbReference type="EC" id="3.1.3.5"/>
    </reaction>
</comment>
<comment type="cofactor">
    <cofactor evidence="1">
        <name>a divalent metal cation</name>
        <dbReference type="ChEBI" id="CHEBI:60240"/>
    </cofactor>
    <text evidence="1">Binds 1 divalent metal cation per subunit.</text>
</comment>
<comment type="subcellular location">
    <subcellularLocation>
        <location evidence="1">Cytoplasm</location>
    </subcellularLocation>
</comment>
<comment type="similarity">
    <text evidence="1">Belongs to the SurE nucleotidase family.</text>
</comment>